<reference key="1">
    <citation type="journal article" date="2004" name="Biol. Reprod.">
        <title>Determination of genes involved in the early process of embryonic implantation in rhesus monkey (Macaca mulatta) by suppression subtractive hybridization.</title>
        <authorList>
            <person name="Sun X.-Y."/>
            <person name="Li F.-X."/>
            <person name="Li J."/>
            <person name="Tan Y.-F."/>
            <person name="Piao Y.-S."/>
            <person name="Tang S."/>
            <person name="Wang Y.-L."/>
        </authorList>
    </citation>
    <scope>NUCLEOTIDE SEQUENCE [MRNA]</scope>
</reference>
<accession>Q7YRN1</accession>
<name>SFRP4_MACMU</name>
<sequence>MFLSILVALCLWLHLALGVRGAPCEAVRIPMCRHMPWNITRMPNHLHHSTQENAILAIEQYEELVDVNCSSVLRFFLCAMYAPICTLEFLHDPIKPCKSVCQRARDDCEPLMKMYNHSWPESLACDELPVYDRGVCISPEAIVTDLPEDVKWIDITPDMMVQERPLDVDCKRLSPDRCKCKKVKPTLATYLSKNCSYVIHAKIKAVQRSGCNEVTTVVDVKEIFKSSSPIPRTQVPLITNSSCQCPHILPHQDVLIMCYEWRSRMMLLENCLVEKWRDQLSKRSIQWEERLREQRRTIQDKKKTAGRTSRSNPPKPKGKPPAPKPASPKKNIKTRSAQKKTNPKKV</sequence>
<organism>
    <name type="scientific">Macaca mulatta</name>
    <name type="common">Rhesus macaque</name>
    <dbReference type="NCBI Taxonomy" id="9544"/>
    <lineage>
        <taxon>Eukaryota</taxon>
        <taxon>Metazoa</taxon>
        <taxon>Chordata</taxon>
        <taxon>Craniata</taxon>
        <taxon>Vertebrata</taxon>
        <taxon>Euteleostomi</taxon>
        <taxon>Mammalia</taxon>
        <taxon>Eutheria</taxon>
        <taxon>Euarchontoglires</taxon>
        <taxon>Primates</taxon>
        <taxon>Haplorrhini</taxon>
        <taxon>Catarrhini</taxon>
        <taxon>Cercopithecidae</taxon>
        <taxon>Cercopithecinae</taxon>
        <taxon>Macaca</taxon>
    </lineage>
</organism>
<evidence type="ECO:0000250" key="1"/>
<evidence type="ECO:0000250" key="2">
    <source>
        <dbReference type="UniProtKB" id="Q6FHJ7"/>
    </source>
</evidence>
<evidence type="ECO:0000250" key="3">
    <source>
        <dbReference type="UniProtKB" id="Q9Z1N6"/>
    </source>
</evidence>
<evidence type="ECO:0000255" key="4"/>
<evidence type="ECO:0000255" key="5">
    <source>
        <dbReference type="PROSITE-ProRule" id="PRU00090"/>
    </source>
</evidence>
<evidence type="ECO:0000255" key="6">
    <source>
        <dbReference type="PROSITE-ProRule" id="PRU00295"/>
    </source>
</evidence>
<evidence type="ECO:0000256" key="7">
    <source>
        <dbReference type="SAM" id="MobiDB-lite"/>
    </source>
</evidence>
<evidence type="ECO:0000305" key="8"/>
<protein>
    <recommendedName>
        <fullName>Secreted frizzled-related protein 4</fullName>
        <shortName>sFRP-4</shortName>
    </recommendedName>
</protein>
<feature type="signal peptide" evidence="4">
    <location>
        <begin position="1"/>
        <end position="18"/>
    </location>
</feature>
<feature type="chain" id="PRO_0000032551" description="Secreted frizzled-related protein 4">
    <location>
        <begin position="19"/>
        <end position="346"/>
    </location>
</feature>
<feature type="domain" description="FZ" evidence="5">
    <location>
        <begin position="19"/>
        <end position="139"/>
    </location>
</feature>
<feature type="domain" description="NTR" evidence="6">
    <location>
        <begin position="178"/>
        <end position="307"/>
    </location>
</feature>
<feature type="region of interest" description="Disordered" evidence="7">
    <location>
        <begin position="294"/>
        <end position="346"/>
    </location>
</feature>
<feature type="compositionally biased region" description="Basic and acidic residues" evidence="7">
    <location>
        <begin position="294"/>
        <end position="303"/>
    </location>
</feature>
<feature type="compositionally biased region" description="Pro residues" evidence="7">
    <location>
        <begin position="313"/>
        <end position="326"/>
    </location>
</feature>
<feature type="compositionally biased region" description="Basic residues" evidence="7">
    <location>
        <begin position="330"/>
        <end position="346"/>
    </location>
</feature>
<feature type="glycosylation site" description="N-linked (GlcNAc...) asparagine" evidence="4">
    <location>
        <position position="38"/>
    </location>
</feature>
<feature type="glycosylation site" description="N-linked (GlcNAc...) asparagine" evidence="4">
    <location>
        <position position="68"/>
    </location>
</feature>
<feature type="glycosylation site" description="N-linked (GlcNAc...) asparagine" evidence="4">
    <location>
        <position position="116"/>
    </location>
</feature>
<feature type="glycosylation site" description="N-linked (GlcNAc...) asparagine" evidence="4">
    <location>
        <position position="194"/>
    </location>
</feature>
<feature type="glycosylation site" description="N-linked (GlcNAc...) asparagine" evidence="4">
    <location>
        <position position="240"/>
    </location>
</feature>
<feature type="disulfide bond" evidence="1">
    <location>
        <begin position="24"/>
        <end position="85"/>
    </location>
</feature>
<feature type="disulfide bond" evidence="1">
    <location>
        <begin position="32"/>
        <end position="78"/>
    </location>
</feature>
<feature type="disulfide bond" evidence="1">
    <location>
        <begin position="69"/>
        <end position="108"/>
    </location>
</feature>
<feature type="disulfide bond" evidence="1">
    <location>
        <begin position="97"/>
        <end position="136"/>
    </location>
</feature>
<feature type="disulfide bond" evidence="1">
    <location>
        <begin position="101"/>
        <end position="125"/>
    </location>
</feature>
<dbReference type="EMBL" id="AY321585">
    <property type="protein sequence ID" value="AAP86211.1"/>
    <property type="molecule type" value="mRNA"/>
</dbReference>
<dbReference type="RefSeq" id="NP_001028134.1">
    <property type="nucleotide sequence ID" value="NM_001032962.1"/>
</dbReference>
<dbReference type="SMR" id="Q7YRN1"/>
<dbReference type="FunCoup" id="Q7YRN1">
    <property type="interactions" value="323"/>
</dbReference>
<dbReference type="STRING" id="9544.ENSMMUP00000027760"/>
<dbReference type="GlyCosmos" id="Q7YRN1">
    <property type="glycosylation" value="5 sites, No reported glycans"/>
</dbReference>
<dbReference type="PaxDb" id="9544-ENSMMUP00000027760"/>
<dbReference type="GeneID" id="574393"/>
<dbReference type="KEGG" id="mcc:574393"/>
<dbReference type="CTD" id="6424"/>
<dbReference type="eggNOG" id="KOG3577">
    <property type="taxonomic scope" value="Eukaryota"/>
</dbReference>
<dbReference type="InParanoid" id="Q7YRN1"/>
<dbReference type="OrthoDB" id="5946121at2759"/>
<dbReference type="Proteomes" id="UP000006718">
    <property type="component" value="Unassembled WGS sequence"/>
</dbReference>
<dbReference type="GO" id="GO:0005737">
    <property type="term" value="C:cytoplasm"/>
    <property type="evidence" value="ECO:0000318"/>
    <property type="project" value="GO_Central"/>
</dbReference>
<dbReference type="GO" id="GO:0005615">
    <property type="term" value="C:extracellular space"/>
    <property type="evidence" value="ECO:0000318"/>
    <property type="project" value="GO_Central"/>
</dbReference>
<dbReference type="GO" id="GO:0017147">
    <property type="term" value="F:Wnt-protein binding"/>
    <property type="evidence" value="ECO:0000318"/>
    <property type="project" value="GO_Central"/>
</dbReference>
<dbReference type="GO" id="GO:0060349">
    <property type="term" value="P:bone morphogenesis"/>
    <property type="evidence" value="ECO:0000250"/>
    <property type="project" value="UniProtKB"/>
</dbReference>
<dbReference type="GO" id="GO:0060070">
    <property type="term" value="P:canonical Wnt signaling pathway"/>
    <property type="evidence" value="ECO:0000318"/>
    <property type="project" value="GO_Central"/>
</dbReference>
<dbReference type="GO" id="GO:0030154">
    <property type="term" value="P:cell differentiation"/>
    <property type="evidence" value="ECO:0007669"/>
    <property type="project" value="UniProtKB-KW"/>
</dbReference>
<dbReference type="GO" id="GO:0090090">
    <property type="term" value="P:negative regulation of canonical Wnt signaling pathway"/>
    <property type="evidence" value="ECO:0000250"/>
    <property type="project" value="UniProtKB"/>
</dbReference>
<dbReference type="GO" id="GO:0008285">
    <property type="term" value="P:negative regulation of cell population proliferation"/>
    <property type="evidence" value="ECO:0007669"/>
    <property type="project" value="UniProtKB-ARBA"/>
</dbReference>
<dbReference type="GO" id="GO:2000051">
    <property type="term" value="P:negative regulation of non-canonical Wnt signaling pathway"/>
    <property type="evidence" value="ECO:0000250"/>
    <property type="project" value="UniProtKB"/>
</dbReference>
<dbReference type="GO" id="GO:0035567">
    <property type="term" value="P:non-canonical Wnt signaling pathway"/>
    <property type="evidence" value="ECO:0000318"/>
    <property type="project" value="GO_Central"/>
</dbReference>
<dbReference type="GO" id="GO:0030510">
    <property type="term" value="P:regulation of BMP signaling pathway"/>
    <property type="evidence" value="ECO:0000250"/>
    <property type="project" value="UniProtKB"/>
</dbReference>
<dbReference type="FunFam" id="1.10.2000.10:FF:000005">
    <property type="entry name" value="secreted frizzled-related protein 4"/>
    <property type="match status" value="1"/>
</dbReference>
<dbReference type="FunFam" id="2.40.50.120:FF:000011">
    <property type="entry name" value="Secreted frizzled-related sequence protein 4"/>
    <property type="match status" value="1"/>
</dbReference>
<dbReference type="Gene3D" id="2.40.50.120">
    <property type="match status" value="1"/>
</dbReference>
<dbReference type="Gene3D" id="1.10.2000.10">
    <property type="entry name" value="Frizzled cysteine-rich domain"/>
    <property type="match status" value="1"/>
</dbReference>
<dbReference type="InterPro" id="IPR015526">
    <property type="entry name" value="Frizzled/SFRP"/>
</dbReference>
<dbReference type="InterPro" id="IPR020067">
    <property type="entry name" value="Frizzled_dom"/>
</dbReference>
<dbReference type="InterPro" id="IPR036790">
    <property type="entry name" value="Frizzled_dom_sf"/>
</dbReference>
<dbReference type="InterPro" id="IPR001134">
    <property type="entry name" value="Netrin_domain"/>
</dbReference>
<dbReference type="InterPro" id="IPR018933">
    <property type="entry name" value="Netrin_module_non-TIMP"/>
</dbReference>
<dbReference type="InterPro" id="IPR008993">
    <property type="entry name" value="TIMP-like_OB-fold"/>
</dbReference>
<dbReference type="PANTHER" id="PTHR11309">
    <property type="entry name" value="FRIZZLED"/>
    <property type="match status" value="1"/>
</dbReference>
<dbReference type="PANTHER" id="PTHR11309:SF7">
    <property type="entry name" value="SECRETED FRIZZLED-RELATED PROTEIN 4"/>
    <property type="match status" value="1"/>
</dbReference>
<dbReference type="Pfam" id="PF01392">
    <property type="entry name" value="Fz"/>
    <property type="match status" value="1"/>
</dbReference>
<dbReference type="Pfam" id="PF01759">
    <property type="entry name" value="NTR"/>
    <property type="match status" value="1"/>
</dbReference>
<dbReference type="SMART" id="SM00643">
    <property type="entry name" value="C345C"/>
    <property type="match status" value="1"/>
</dbReference>
<dbReference type="SMART" id="SM00063">
    <property type="entry name" value="FRI"/>
    <property type="match status" value="1"/>
</dbReference>
<dbReference type="SUPFAM" id="SSF63501">
    <property type="entry name" value="Frizzled cysteine-rich domain"/>
    <property type="match status" value="1"/>
</dbReference>
<dbReference type="SUPFAM" id="SSF50242">
    <property type="entry name" value="TIMP-like"/>
    <property type="match status" value="1"/>
</dbReference>
<dbReference type="PROSITE" id="PS50038">
    <property type="entry name" value="FZ"/>
    <property type="match status" value="1"/>
</dbReference>
<dbReference type="PROSITE" id="PS50189">
    <property type="entry name" value="NTR"/>
    <property type="match status" value="1"/>
</dbReference>
<proteinExistence type="evidence at transcript level"/>
<keyword id="KW-0217">Developmental protein</keyword>
<keyword id="KW-0221">Differentiation</keyword>
<keyword id="KW-1015">Disulfide bond</keyword>
<keyword id="KW-0325">Glycoprotein</keyword>
<keyword id="KW-1185">Reference proteome</keyword>
<keyword id="KW-0964">Secreted</keyword>
<keyword id="KW-0732">Signal</keyword>
<keyword id="KW-0879">Wnt signaling pathway</keyword>
<comment type="function">
    <text evidence="3">Soluble frizzled-related proteins (sFRPS) function as modulators of Wnt signaling through direct interaction with Wnts. They have a role in regulating cell growth and differentiation in specific cell types. SFRP4 plays a role in bone morphogenesis. May also act as a regulator of adult uterine morphology and function. May also increase apoptosis during ovulation possibly through modulation of FZ1/FZ4/WNT4 signaling. Has phosphaturic effects by specifically inhibiting sodium-dependent phosphate uptake.</text>
</comment>
<comment type="subcellular location">
    <subcellularLocation>
        <location evidence="2">Secreted</location>
    </subcellularLocation>
</comment>
<comment type="domain">
    <text evidence="1">The FZ domain is involved in binding with Wnt ligands.</text>
</comment>
<comment type="similarity">
    <text evidence="8">Belongs to the secreted frizzled-related protein (sFRP) family.</text>
</comment>
<gene>
    <name type="primary">SFRP4</name>
</gene>